<gene>
    <name evidence="1" type="primary">rpsC</name>
    <name type="ordered locus">jk1827</name>
</gene>
<evidence type="ECO:0000255" key="1">
    <source>
        <dbReference type="HAMAP-Rule" id="MF_01309"/>
    </source>
</evidence>
<evidence type="ECO:0000256" key="2">
    <source>
        <dbReference type="SAM" id="MobiDB-lite"/>
    </source>
</evidence>
<evidence type="ECO:0000305" key="3"/>
<comment type="function">
    <text evidence="1">Binds the lower part of the 30S subunit head. Binds mRNA in the 70S ribosome, positioning it for translation.</text>
</comment>
<comment type="subunit">
    <text evidence="1">Part of the 30S ribosomal subunit. Forms a tight complex with proteins S10 and S14.</text>
</comment>
<comment type="similarity">
    <text evidence="1">Belongs to the universal ribosomal protein uS3 family.</text>
</comment>
<reference key="1">
    <citation type="journal article" date="2005" name="J. Bacteriol.">
        <title>Complete genome sequence and analysis of the multiresistant nosocomial pathogen Corynebacterium jeikeium K411, a lipid-requiring bacterium of the human skin flora.</title>
        <authorList>
            <person name="Tauch A."/>
            <person name="Kaiser O."/>
            <person name="Hain T."/>
            <person name="Goesmann A."/>
            <person name="Weisshaar B."/>
            <person name="Albersmeier A."/>
            <person name="Bekel T."/>
            <person name="Bischoff N."/>
            <person name="Brune I."/>
            <person name="Chakraborty T."/>
            <person name="Kalinowski J."/>
            <person name="Meyer F."/>
            <person name="Rupp O."/>
            <person name="Schneiker S."/>
            <person name="Viehoever P."/>
            <person name="Puehler A."/>
        </authorList>
    </citation>
    <scope>NUCLEOTIDE SEQUENCE [LARGE SCALE GENOMIC DNA]</scope>
    <source>
        <strain>K411</strain>
    </source>
</reference>
<accession>Q4JT53</accession>
<proteinExistence type="inferred from homology"/>
<dbReference type="EMBL" id="CR931997">
    <property type="protein sequence ID" value="CAI38004.1"/>
    <property type="molecule type" value="Genomic_DNA"/>
</dbReference>
<dbReference type="RefSeq" id="WP_005291959.1">
    <property type="nucleotide sequence ID" value="NC_007164.1"/>
</dbReference>
<dbReference type="SMR" id="Q4JT53"/>
<dbReference type="STRING" id="306537.jk1827"/>
<dbReference type="GeneID" id="92739450"/>
<dbReference type="KEGG" id="cjk:jk1827"/>
<dbReference type="eggNOG" id="COG0092">
    <property type="taxonomic scope" value="Bacteria"/>
</dbReference>
<dbReference type="HOGENOM" id="CLU_058591_0_0_11"/>
<dbReference type="OrthoDB" id="9806396at2"/>
<dbReference type="Proteomes" id="UP000000545">
    <property type="component" value="Chromosome"/>
</dbReference>
<dbReference type="GO" id="GO:0022627">
    <property type="term" value="C:cytosolic small ribosomal subunit"/>
    <property type="evidence" value="ECO:0007669"/>
    <property type="project" value="TreeGrafter"/>
</dbReference>
<dbReference type="GO" id="GO:0003729">
    <property type="term" value="F:mRNA binding"/>
    <property type="evidence" value="ECO:0007669"/>
    <property type="project" value="UniProtKB-UniRule"/>
</dbReference>
<dbReference type="GO" id="GO:0019843">
    <property type="term" value="F:rRNA binding"/>
    <property type="evidence" value="ECO:0007669"/>
    <property type="project" value="UniProtKB-UniRule"/>
</dbReference>
<dbReference type="GO" id="GO:0003735">
    <property type="term" value="F:structural constituent of ribosome"/>
    <property type="evidence" value="ECO:0007669"/>
    <property type="project" value="InterPro"/>
</dbReference>
<dbReference type="GO" id="GO:0006412">
    <property type="term" value="P:translation"/>
    <property type="evidence" value="ECO:0007669"/>
    <property type="project" value="UniProtKB-UniRule"/>
</dbReference>
<dbReference type="CDD" id="cd02412">
    <property type="entry name" value="KH-II_30S_S3"/>
    <property type="match status" value="1"/>
</dbReference>
<dbReference type="FunFam" id="3.30.1140.32:FF:000002">
    <property type="entry name" value="30S ribosomal protein S3"/>
    <property type="match status" value="1"/>
</dbReference>
<dbReference type="FunFam" id="3.30.300.20:FF:000001">
    <property type="entry name" value="30S ribosomal protein S3"/>
    <property type="match status" value="1"/>
</dbReference>
<dbReference type="Gene3D" id="3.30.300.20">
    <property type="match status" value="1"/>
</dbReference>
<dbReference type="Gene3D" id="3.30.1140.32">
    <property type="entry name" value="Ribosomal protein S3, C-terminal domain"/>
    <property type="match status" value="1"/>
</dbReference>
<dbReference type="HAMAP" id="MF_01309_B">
    <property type="entry name" value="Ribosomal_uS3_B"/>
    <property type="match status" value="1"/>
</dbReference>
<dbReference type="InterPro" id="IPR004087">
    <property type="entry name" value="KH_dom"/>
</dbReference>
<dbReference type="InterPro" id="IPR015946">
    <property type="entry name" value="KH_dom-like_a/b"/>
</dbReference>
<dbReference type="InterPro" id="IPR004044">
    <property type="entry name" value="KH_dom_type_2"/>
</dbReference>
<dbReference type="InterPro" id="IPR009019">
    <property type="entry name" value="KH_sf_prok-type"/>
</dbReference>
<dbReference type="InterPro" id="IPR036419">
    <property type="entry name" value="Ribosomal_S3_C_sf"/>
</dbReference>
<dbReference type="InterPro" id="IPR005704">
    <property type="entry name" value="Ribosomal_uS3_bac-typ"/>
</dbReference>
<dbReference type="InterPro" id="IPR001351">
    <property type="entry name" value="Ribosomal_uS3_C"/>
</dbReference>
<dbReference type="InterPro" id="IPR018280">
    <property type="entry name" value="Ribosomal_uS3_CS"/>
</dbReference>
<dbReference type="NCBIfam" id="TIGR01009">
    <property type="entry name" value="rpsC_bact"/>
    <property type="match status" value="1"/>
</dbReference>
<dbReference type="PANTHER" id="PTHR11760">
    <property type="entry name" value="30S/40S RIBOSOMAL PROTEIN S3"/>
    <property type="match status" value="1"/>
</dbReference>
<dbReference type="PANTHER" id="PTHR11760:SF19">
    <property type="entry name" value="SMALL RIBOSOMAL SUBUNIT PROTEIN US3C"/>
    <property type="match status" value="1"/>
</dbReference>
<dbReference type="Pfam" id="PF07650">
    <property type="entry name" value="KH_2"/>
    <property type="match status" value="1"/>
</dbReference>
<dbReference type="Pfam" id="PF00189">
    <property type="entry name" value="Ribosomal_S3_C"/>
    <property type="match status" value="1"/>
</dbReference>
<dbReference type="SMART" id="SM00322">
    <property type="entry name" value="KH"/>
    <property type="match status" value="1"/>
</dbReference>
<dbReference type="SUPFAM" id="SSF54814">
    <property type="entry name" value="Prokaryotic type KH domain (KH-domain type II)"/>
    <property type="match status" value="1"/>
</dbReference>
<dbReference type="SUPFAM" id="SSF54821">
    <property type="entry name" value="Ribosomal protein S3 C-terminal domain"/>
    <property type="match status" value="1"/>
</dbReference>
<dbReference type="PROSITE" id="PS50823">
    <property type="entry name" value="KH_TYPE_2"/>
    <property type="match status" value="1"/>
</dbReference>
<dbReference type="PROSITE" id="PS00548">
    <property type="entry name" value="RIBOSOMAL_S3"/>
    <property type="match status" value="1"/>
</dbReference>
<feature type="chain" id="PRO_0000230692" description="Small ribosomal subunit protein uS3">
    <location>
        <begin position="1"/>
        <end position="247"/>
    </location>
</feature>
<feature type="domain" description="KH type-2" evidence="1">
    <location>
        <begin position="38"/>
        <end position="106"/>
    </location>
</feature>
<feature type="region of interest" description="Disordered" evidence="2">
    <location>
        <begin position="214"/>
        <end position="247"/>
    </location>
</feature>
<feature type="compositionally biased region" description="Basic and acidic residues" evidence="2">
    <location>
        <begin position="214"/>
        <end position="226"/>
    </location>
</feature>
<feature type="compositionally biased region" description="Basic residues" evidence="2">
    <location>
        <begin position="227"/>
        <end position="238"/>
    </location>
</feature>
<name>RS3_CORJK</name>
<protein>
    <recommendedName>
        <fullName evidence="1">Small ribosomal subunit protein uS3</fullName>
    </recommendedName>
    <alternativeName>
        <fullName evidence="3">30S ribosomal protein S3</fullName>
    </alternativeName>
</protein>
<organism>
    <name type="scientific">Corynebacterium jeikeium (strain K411)</name>
    <dbReference type="NCBI Taxonomy" id="306537"/>
    <lineage>
        <taxon>Bacteria</taxon>
        <taxon>Bacillati</taxon>
        <taxon>Actinomycetota</taxon>
        <taxon>Actinomycetes</taxon>
        <taxon>Mycobacteriales</taxon>
        <taxon>Corynebacteriaceae</taxon>
        <taxon>Corynebacterium</taxon>
    </lineage>
</organism>
<sequence>MGQKIHPHGLRLGITSEWRSRWYADKQYADYLAEDIKIRDFLSEGLDRAGIANVVIERTHDRVRVDIHTARPGIVIGRRGSEADRIRGQLEKLTGKQVQLNILEVKNIDANAQLVAQSIAEQLTNRVAFRRAMRKAIQGAMRQPQVKGIKVVCSGRLGGAEMGRTERYHEGRVPLHTLRAEIDYGTYEAHTTFGRIGVKVWIYKGDVVGGRRESLMNARDERPSRGRRERPRRGGARRQRAEQKQEG</sequence>
<keyword id="KW-1185">Reference proteome</keyword>
<keyword id="KW-0687">Ribonucleoprotein</keyword>
<keyword id="KW-0689">Ribosomal protein</keyword>
<keyword id="KW-0694">RNA-binding</keyword>
<keyword id="KW-0699">rRNA-binding</keyword>